<reference key="1">
    <citation type="journal article" date="1992" name="Science">
        <title>Carnivorous plants: phylogeny and structural evolution.</title>
        <authorList>
            <person name="Albert V.A."/>
            <person name="Williams S.E."/>
            <person name="Chase M.W."/>
        </authorList>
    </citation>
    <scope>NUCLEOTIDE SEQUENCE [GENOMIC DNA]</scope>
</reference>
<reference key="2">
    <citation type="journal article" date="1992" name="Ann. Mo. Bot. Gard.">
        <title>Monophyly of the Asteridae and identification of their major lineages inferred from DNA sequences of rbcL.</title>
        <authorList>
            <person name="Olmstead R.G."/>
            <person name="Michaels H.J."/>
            <person name="Scott K.M."/>
            <person name="Palmer J.D."/>
        </authorList>
        <dbReference type="AGRICOLA" id="IND93014998"/>
    </citation>
    <scope>NUCLEOTIDE SEQUENCE [GENOMIC DNA]</scope>
</reference>
<gene>
    <name evidence="1" type="primary">rbcL</name>
</gene>
<proteinExistence type="inferred from homology"/>
<comment type="function">
    <text evidence="1">RuBisCO catalyzes two reactions: the carboxylation of D-ribulose 1,5-bisphosphate, the primary event in carbon dioxide fixation, as well as the oxidative fragmentation of the pentose substrate in the photorespiration process. Both reactions occur simultaneously and in competition at the same active site.</text>
</comment>
<comment type="catalytic activity">
    <reaction evidence="1">
        <text>2 (2R)-3-phosphoglycerate + 2 H(+) = D-ribulose 1,5-bisphosphate + CO2 + H2O</text>
        <dbReference type="Rhea" id="RHEA:23124"/>
        <dbReference type="ChEBI" id="CHEBI:15377"/>
        <dbReference type="ChEBI" id="CHEBI:15378"/>
        <dbReference type="ChEBI" id="CHEBI:16526"/>
        <dbReference type="ChEBI" id="CHEBI:57870"/>
        <dbReference type="ChEBI" id="CHEBI:58272"/>
        <dbReference type="EC" id="4.1.1.39"/>
    </reaction>
</comment>
<comment type="catalytic activity">
    <reaction evidence="1">
        <text>D-ribulose 1,5-bisphosphate + O2 = 2-phosphoglycolate + (2R)-3-phosphoglycerate + 2 H(+)</text>
        <dbReference type="Rhea" id="RHEA:36631"/>
        <dbReference type="ChEBI" id="CHEBI:15378"/>
        <dbReference type="ChEBI" id="CHEBI:15379"/>
        <dbReference type="ChEBI" id="CHEBI:57870"/>
        <dbReference type="ChEBI" id="CHEBI:58033"/>
        <dbReference type="ChEBI" id="CHEBI:58272"/>
    </reaction>
</comment>
<comment type="cofactor">
    <cofactor evidence="1">
        <name>Mg(2+)</name>
        <dbReference type="ChEBI" id="CHEBI:18420"/>
    </cofactor>
    <text evidence="1">Binds 1 Mg(2+) ion per subunit.</text>
</comment>
<comment type="subunit">
    <text evidence="1">Heterohexadecamer of 8 large chains and 8 small chains; disulfide-linked. The disulfide link is formed within the large subunit homodimers.</text>
</comment>
<comment type="subcellular location">
    <subcellularLocation>
        <location>Plastid</location>
        <location>Chloroplast</location>
    </subcellularLocation>
</comment>
<comment type="PTM">
    <text evidence="1">The disulfide bond which can form in the large chain dimeric partners within the hexadecamer appears to be associated with oxidative stress and protein turnover.</text>
</comment>
<comment type="miscellaneous">
    <text evidence="1">The basic functional RuBisCO is composed of a large chain homodimer in a 'head-to-tail' conformation. In form I RuBisCO this homodimer is arranged in a barrel-like tetramer with the small subunits forming a tetrameric 'cap' on each end of the 'barrel'.</text>
</comment>
<comment type="similarity">
    <text evidence="1">Belongs to the RuBisCO large chain family. Type I subfamily.</text>
</comment>
<geneLocation type="chloroplast"/>
<keyword id="KW-0113">Calvin cycle</keyword>
<keyword id="KW-0120">Carbon dioxide fixation</keyword>
<keyword id="KW-0150">Chloroplast</keyword>
<keyword id="KW-1015">Disulfide bond</keyword>
<keyword id="KW-0456">Lyase</keyword>
<keyword id="KW-0460">Magnesium</keyword>
<keyword id="KW-0479">Metal-binding</keyword>
<keyword id="KW-0488">Methylation</keyword>
<keyword id="KW-0503">Monooxygenase</keyword>
<keyword id="KW-0560">Oxidoreductase</keyword>
<keyword id="KW-0601">Photorespiration</keyword>
<keyword id="KW-0602">Photosynthesis</keyword>
<keyword id="KW-0934">Plastid</keyword>
<feature type="chain" id="PRO_0000062490" description="Ribulose bisphosphate carboxylase large chain">
    <location>
        <begin position="1" status="less than"/>
        <end position="466"/>
    </location>
</feature>
<feature type="active site" description="Proton acceptor" evidence="1">
    <location>
        <position position="166"/>
    </location>
</feature>
<feature type="active site" description="Proton acceptor" evidence="1">
    <location>
        <position position="285"/>
    </location>
</feature>
<feature type="binding site" description="in homodimeric partner" evidence="1">
    <location>
        <position position="114"/>
    </location>
    <ligand>
        <name>substrate</name>
    </ligand>
</feature>
<feature type="binding site" evidence="1">
    <location>
        <position position="164"/>
    </location>
    <ligand>
        <name>substrate</name>
    </ligand>
</feature>
<feature type="binding site" evidence="1">
    <location>
        <position position="168"/>
    </location>
    <ligand>
        <name>substrate</name>
    </ligand>
</feature>
<feature type="binding site" description="via carbamate group" evidence="1">
    <location>
        <position position="192"/>
    </location>
    <ligand>
        <name>Mg(2+)</name>
        <dbReference type="ChEBI" id="CHEBI:18420"/>
    </ligand>
</feature>
<feature type="binding site" evidence="1">
    <location>
        <position position="194"/>
    </location>
    <ligand>
        <name>Mg(2+)</name>
        <dbReference type="ChEBI" id="CHEBI:18420"/>
    </ligand>
</feature>
<feature type="binding site" evidence="1">
    <location>
        <position position="195"/>
    </location>
    <ligand>
        <name>Mg(2+)</name>
        <dbReference type="ChEBI" id="CHEBI:18420"/>
    </ligand>
</feature>
<feature type="binding site" evidence="1">
    <location>
        <position position="286"/>
    </location>
    <ligand>
        <name>substrate</name>
    </ligand>
</feature>
<feature type="binding site" evidence="1">
    <location>
        <position position="318"/>
    </location>
    <ligand>
        <name>substrate</name>
    </ligand>
</feature>
<feature type="binding site" evidence="1">
    <location>
        <position position="370"/>
    </location>
    <ligand>
        <name>substrate</name>
    </ligand>
</feature>
<feature type="site" description="Transition state stabilizer" evidence="1">
    <location>
        <position position="325"/>
    </location>
</feature>
<feature type="modified residue" description="N6,N6,N6-trimethyllysine" evidence="1">
    <location>
        <position position="5"/>
    </location>
</feature>
<feature type="modified residue" description="N6-carboxylysine" evidence="1">
    <location>
        <position position="192"/>
    </location>
</feature>
<feature type="disulfide bond" description="Interchain; in linked form" evidence="1">
    <location>
        <position position="238"/>
    </location>
</feature>
<feature type="non-terminal residue">
    <location>
        <position position="1"/>
    </location>
</feature>
<name>RBL_HEDHE</name>
<accession>P28421</accession>
<sequence>SVGFKAGVKDYRLTYYTPDYQTKDTDILAAFRVTPQPGVPPEEAGAAVAAESSTGTWTTVWTDGLTSLDRYKGRCYGIEPVAGEESQFIAYVAYPLDLFEEGSVTNMFTSIVGNVFGFKALRALRLEDLRIPVAYVKTFQGPXHGIQVERDKLNKYGRPLLGCTIKPKLGLSAKNYGRAVYECLRGGLDFTKDDENVNSQPFMRWRDRFVSXAEALYKAQAETGEIKGHYLNATAGTCEEMMKRAVFARELGVPIVMHDYLTGGFTANTTLAHYCRDNGLLLHIHRAMHAVIDRQKNHGMTFRVLAKGLRMSGGDHIHSGTVVGKLEGERDITLGFVDLLRDDFIEKDRSRGIYFTQDWVSLPGVLPVASGGIHVXHMPALTEIFGDDSVLQFGGGTLGHPWGNRPGAVANRVALEACVQARNEGRDLAREGNEIIREAAKWSPELAAACEVWKEIKFEFAAMDVL</sequence>
<evidence type="ECO:0000255" key="1">
    <source>
        <dbReference type="HAMAP-Rule" id="MF_01338"/>
    </source>
</evidence>
<organism>
    <name type="scientific">Hedera helix</name>
    <name type="common">English ivy</name>
    <dbReference type="NCBI Taxonomy" id="4052"/>
    <lineage>
        <taxon>Eukaryota</taxon>
        <taxon>Viridiplantae</taxon>
        <taxon>Streptophyta</taxon>
        <taxon>Embryophyta</taxon>
        <taxon>Tracheophyta</taxon>
        <taxon>Spermatophyta</taxon>
        <taxon>Magnoliopsida</taxon>
        <taxon>eudicotyledons</taxon>
        <taxon>Gunneridae</taxon>
        <taxon>Pentapetalae</taxon>
        <taxon>asterids</taxon>
        <taxon>campanulids</taxon>
        <taxon>Apiales</taxon>
        <taxon>Araliaceae</taxon>
        <taxon>Hedera</taxon>
    </lineage>
</organism>
<protein>
    <recommendedName>
        <fullName evidence="1">Ribulose bisphosphate carboxylase large chain</fullName>
        <shortName evidence="1">RuBisCO large subunit</shortName>
        <ecNumber evidence="1">4.1.1.39</ecNumber>
    </recommendedName>
</protein>
<dbReference type="EC" id="4.1.1.39" evidence="1"/>
<dbReference type="EMBL" id="L01924">
    <property type="protein sequence ID" value="AAA84306.2"/>
    <property type="molecule type" value="Genomic_DNA"/>
</dbReference>
<dbReference type="GO" id="GO:0009507">
    <property type="term" value="C:chloroplast"/>
    <property type="evidence" value="ECO:0007669"/>
    <property type="project" value="UniProtKB-SubCell"/>
</dbReference>
<dbReference type="GO" id="GO:0000287">
    <property type="term" value="F:magnesium ion binding"/>
    <property type="evidence" value="ECO:0007669"/>
    <property type="project" value="InterPro"/>
</dbReference>
<dbReference type="GO" id="GO:0004497">
    <property type="term" value="F:monooxygenase activity"/>
    <property type="evidence" value="ECO:0007669"/>
    <property type="project" value="UniProtKB-KW"/>
</dbReference>
<dbReference type="GO" id="GO:0016984">
    <property type="term" value="F:ribulose-bisphosphate carboxylase activity"/>
    <property type="evidence" value="ECO:0007669"/>
    <property type="project" value="UniProtKB-EC"/>
</dbReference>
<dbReference type="GO" id="GO:0009853">
    <property type="term" value="P:photorespiration"/>
    <property type="evidence" value="ECO:0007669"/>
    <property type="project" value="UniProtKB-KW"/>
</dbReference>
<dbReference type="GO" id="GO:0019253">
    <property type="term" value="P:reductive pentose-phosphate cycle"/>
    <property type="evidence" value="ECO:0007669"/>
    <property type="project" value="UniProtKB-KW"/>
</dbReference>
<dbReference type="CDD" id="cd08212">
    <property type="entry name" value="RuBisCO_large_I"/>
    <property type="match status" value="1"/>
</dbReference>
<dbReference type="FunFam" id="3.20.20.110:FF:000001">
    <property type="entry name" value="Ribulose bisphosphate carboxylase large chain"/>
    <property type="match status" value="1"/>
</dbReference>
<dbReference type="FunFam" id="3.30.70.150:FF:000001">
    <property type="entry name" value="Ribulose bisphosphate carboxylase large chain"/>
    <property type="match status" value="1"/>
</dbReference>
<dbReference type="Gene3D" id="3.20.20.110">
    <property type="entry name" value="Ribulose bisphosphate carboxylase, large subunit, C-terminal domain"/>
    <property type="match status" value="1"/>
</dbReference>
<dbReference type="Gene3D" id="3.30.70.150">
    <property type="entry name" value="RuBisCO large subunit, N-terminal domain"/>
    <property type="match status" value="1"/>
</dbReference>
<dbReference type="HAMAP" id="MF_01338">
    <property type="entry name" value="RuBisCO_L_type1"/>
    <property type="match status" value="1"/>
</dbReference>
<dbReference type="InterPro" id="IPR033966">
    <property type="entry name" value="RuBisCO"/>
</dbReference>
<dbReference type="InterPro" id="IPR020878">
    <property type="entry name" value="RuBisCo_large_chain_AS"/>
</dbReference>
<dbReference type="InterPro" id="IPR000685">
    <property type="entry name" value="RuBisCO_lsu_C"/>
</dbReference>
<dbReference type="InterPro" id="IPR036376">
    <property type="entry name" value="RuBisCO_lsu_C_sf"/>
</dbReference>
<dbReference type="InterPro" id="IPR017443">
    <property type="entry name" value="RuBisCO_lsu_fd_N"/>
</dbReference>
<dbReference type="InterPro" id="IPR036422">
    <property type="entry name" value="RuBisCO_lsu_N_sf"/>
</dbReference>
<dbReference type="InterPro" id="IPR020888">
    <property type="entry name" value="RuBisCO_lsuI"/>
</dbReference>
<dbReference type="NCBIfam" id="NF003252">
    <property type="entry name" value="PRK04208.1"/>
    <property type="match status" value="1"/>
</dbReference>
<dbReference type="PANTHER" id="PTHR42704">
    <property type="entry name" value="RIBULOSE BISPHOSPHATE CARBOXYLASE"/>
    <property type="match status" value="1"/>
</dbReference>
<dbReference type="PANTHER" id="PTHR42704:SF15">
    <property type="entry name" value="RIBULOSE BISPHOSPHATE CARBOXYLASE LARGE CHAIN"/>
    <property type="match status" value="1"/>
</dbReference>
<dbReference type="Pfam" id="PF00016">
    <property type="entry name" value="RuBisCO_large"/>
    <property type="match status" value="1"/>
</dbReference>
<dbReference type="Pfam" id="PF02788">
    <property type="entry name" value="RuBisCO_large_N"/>
    <property type="match status" value="1"/>
</dbReference>
<dbReference type="SFLD" id="SFLDG01052">
    <property type="entry name" value="RuBisCO"/>
    <property type="match status" value="1"/>
</dbReference>
<dbReference type="SFLD" id="SFLDS00014">
    <property type="entry name" value="RuBisCO"/>
    <property type="match status" value="1"/>
</dbReference>
<dbReference type="SFLD" id="SFLDG00301">
    <property type="entry name" value="RuBisCO-like_proteins"/>
    <property type="match status" value="1"/>
</dbReference>
<dbReference type="SUPFAM" id="SSF51649">
    <property type="entry name" value="RuBisCo, C-terminal domain"/>
    <property type="match status" value="1"/>
</dbReference>
<dbReference type="SUPFAM" id="SSF54966">
    <property type="entry name" value="RuBisCO, large subunit, small (N-terminal) domain"/>
    <property type="match status" value="1"/>
</dbReference>
<dbReference type="PROSITE" id="PS00157">
    <property type="entry name" value="RUBISCO_LARGE"/>
    <property type="match status" value="1"/>
</dbReference>